<protein>
    <recommendedName>
        <fullName>Mitochondrial 15S rRNA processing factor CCM1</fullName>
    </recommendedName>
</protein>
<evidence type="ECO:0000250" key="1">
    <source>
        <dbReference type="UniProtKB" id="P48237"/>
    </source>
</evidence>
<evidence type="ECO:0000255" key="2"/>
<evidence type="ECO:0000255" key="3">
    <source>
        <dbReference type="PROSITE-ProRule" id="PRU00708"/>
    </source>
</evidence>
<evidence type="ECO:0000305" key="4"/>
<keyword id="KW-0496">Mitochondrion</keyword>
<keyword id="KW-0507">mRNA processing</keyword>
<keyword id="KW-0508">mRNA splicing</keyword>
<keyword id="KW-1185">Reference proteome</keyword>
<keyword id="KW-0677">Repeat</keyword>
<keyword id="KW-0809">Transit peptide</keyword>
<gene>
    <name type="primary">CCM1</name>
    <name type="ORF">CLUG_02767</name>
</gene>
<sequence length="750" mass="85024">MFIGKKAPAALRKQLWPVFPTYNILGSRNIYVMSHERRKKAAKRKSDKLQQWAEQEEMRLAREKNQQYAKKLKELKQLTRSVASYVRTREARELEAQKIQELSLPSELGKGSEPAGLAAPRSAKIAPFDASAASLSTSAVPLPQSIQDRLGLAVKYLVSKDHQNWSIVLQQLEAAGGFDGLPQKDIRKMVYAIPKDQLRHVFPQIESLLGQAGLAVSPKLLNTYIKSLMLGRTLNDAQIAYIEGIVAKLRQEPGKEGKLGKLSRATYELLIEAYGKNTNVAKMNEVIQEMKELGLQLSPVVYTNVLSTCVYKTRDHQQAVKLFDSMKFLAGSMAPQTREYQDIIVSYVNNDDIEKALDLYQEMLDQKLDFNQNIMVALARGCMSREQLRFKAWDFIFEIYRCGWEPTANTLEYMLYLASKDGDLALARALYQQLNISNALSPRAFSFLFLAYARSNVGKSIEEFQPFAITVHEEGRNFRRNILEKVDLTPTTENPKQAVPYLPKISLSTPQEVLAESSAVMAHALMVNREFVNVESVTTFLNVAARMGSLDDFIDRYEEFTFLDKTGVTETKTVIEPEILESTSVLLAPKEPSPTKSPILAQVTESQKSAFKMPRNTITYLIALKAAAKHKNYIFAQKVWTERGTYRKSAGFRNLPKSEKEKLDFSFASGMVNCLTDMKLLDDALAILVSTEYQFKWTWKELSHLYAAAAEAGYDKVTKTIRGVVKRAQINFEGKIRRKDYKKYVMERGY</sequence>
<reference key="1">
    <citation type="journal article" date="2009" name="Nature">
        <title>Evolution of pathogenicity and sexual reproduction in eight Candida genomes.</title>
        <authorList>
            <person name="Butler G."/>
            <person name="Rasmussen M.D."/>
            <person name="Lin M.F."/>
            <person name="Santos M.A.S."/>
            <person name="Sakthikumar S."/>
            <person name="Munro C.A."/>
            <person name="Rheinbay E."/>
            <person name="Grabherr M."/>
            <person name="Forche A."/>
            <person name="Reedy J.L."/>
            <person name="Agrafioti I."/>
            <person name="Arnaud M.B."/>
            <person name="Bates S."/>
            <person name="Brown A.J.P."/>
            <person name="Brunke S."/>
            <person name="Costanzo M.C."/>
            <person name="Fitzpatrick D.A."/>
            <person name="de Groot P.W.J."/>
            <person name="Harris D."/>
            <person name="Hoyer L.L."/>
            <person name="Hube B."/>
            <person name="Klis F.M."/>
            <person name="Kodira C."/>
            <person name="Lennard N."/>
            <person name="Logue M.E."/>
            <person name="Martin R."/>
            <person name="Neiman A.M."/>
            <person name="Nikolaou E."/>
            <person name="Quail M.A."/>
            <person name="Quinn J."/>
            <person name="Santos M.C."/>
            <person name="Schmitzberger F.F."/>
            <person name="Sherlock G."/>
            <person name="Shah P."/>
            <person name="Silverstein K.A.T."/>
            <person name="Skrzypek M.S."/>
            <person name="Soll D."/>
            <person name="Staggs R."/>
            <person name="Stansfield I."/>
            <person name="Stumpf M.P.H."/>
            <person name="Sudbery P.E."/>
            <person name="Srikantha T."/>
            <person name="Zeng Q."/>
            <person name="Berman J."/>
            <person name="Berriman M."/>
            <person name="Heitman J."/>
            <person name="Gow N.A.R."/>
            <person name="Lorenz M.C."/>
            <person name="Birren B.W."/>
            <person name="Kellis M."/>
            <person name="Cuomo C.A."/>
        </authorList>
    </citation>
    <scope>NUCLEOTIDE SEQUENCE [LARGE SCALE GENOMIC DNA]</scope>
    <source>
        <strain>ATCC 42720</strain>
    </source>
</reference>
<accession>C4Y2K4</accession>
<organism>
    <name type="scientific">Clavispora lusitaniae (strain ATCC 42720)</name>
    <name type="common">Yeast</name>
    <name type="synonym">Candida lusitaniae</name>
    <dbReference type="NCBI Taxonomy" id="306902"/>
    <lineage>
        <taxon>Eukaryota</taxon>
        <taxon>Fungi</taxon>
        <taxon>Dikarya</taxon>
        <taxon>Ascomycota</taxon>
        <taxon>Saccharomycotina</taxon>
        <taxon>Pichiomycetes</taxon>
        <taxon>Metschnikowiaceae</taxon>
        <taxon>Clavispora</taxon>
    </lineage>
</organism>
<comment type="function">
    <text evidence="1">Regulates mitochondrial small subunit maturation by controlling 15S rRNA 5'-end processing. Localizes to the 5' precursor of the 15S rRNA in a position that is subsequently occupied by mS47 in the mature yeast mtSSU. Uses structure and sequence-specific RNA recognition, binding to a single-stranded region of the precursor and specifically recognizing bases -6 to -1. The exchange of Ccm1 for mS47 is coupled to the irreversible removal of precursor rRNA that is accompanied by conformational changes of the mitoribosomal proteins uS5m and mS26. These conformational changes signal completion of 5'-end rRNA processing through protection of the mature 5'-end of the 15S rRNA and stabilization of mS47. The removal of the 5' precursor together with the dissociation of Ccm1 may be catalyzed by the 5'-3' exoribonuclease Pet127. Involved in the specific removal of group I introns in mitochondrial encoded transcripts.</text>
</comment>
<comment type="subunit">
    <text evidence="1">Binds to mitochondrial small subunit 15S rRNA.</text>
</comment>
<comment type="subcellular location">
    <subcellularLocation>
        <location evidence="1">Mitochondrion</location>
    </subcellularLocation>
</comment>
<comment type="miscellaneous">
    <text evidence="1">Involved in mitochondrial-nuclear incompatibility, a major determinant in reproductive isolation between species, through hybrid incompatibility of Ccm1 and its interacting partner 15S rRNA between yeast species.</text>
</comment>
<comment type="similarity">
    <text evidence="4">Belongs to the CCM1 family.</text>
</comment>
<feature type="transit peptide" description="Mitochondrion" evidence="2">
    <location>
        <begin position="1"/>
        <end position="82"/>
    </location>
</feature>
<feature type="chain" id="PRO_0000402261" description="Mitochondrial 15S rRNA processing factor CCM1" evidence="2">
    <location>
        <begin position="83"/>
        <end position="750"/>
    </location>
</feature>
<feature type="repeat" description="PPR 1" evidence="3">
    <location>
        <begin position="263"/>
        <end position="297"/>
    </location>
</feature>
<feature type="repeat" description="PPR 2" evidence="3">
    <location>
        <begin position="298"/>
        <end position="333"/>
    </location>
</feature>
<feature type="repeat" description="PPR 3" evidence="3">
    <location>
        <begin position="336"/>
        <end position="370"/>
    </location>
</feature>
<feature type="repeat" description="PPR 4" evidence="3">
    <location>
        <begin position="371"/>
        <end position="406"/>
    </location>
</feature>
<dbReference type="EMBL" id="CH408078">
    <property type="protein sequence ID" value="EEQ38641.1"/>
    <property type="molecule type" value="Genomic_DNA"/>
</dbReference>
<dbReference type="RefSeq" id="XP_002617323.1">
    <property type="nucleotide sequence ID" value="XM_002617277.1"/>
</dbReference>
<dbReference type="SMR" id="C4Y2K4"/>
<dbReference type="FunCoup" id="C4Y2K4">
    <property type="interactions" value="107"/>
</dbReference>
<dbReference type="STRING" id="306902.C4Y2K4"/>
<dbReference type="GeneID" id="8497634"/>
<dbReference type="KEGG" id="clu:CLUG_02767"/>
<dbReference type="VEuPathDB" id="FungiDB:CLUG_02767"/>
<dbReference type="HOGENOM" id="CLU_019745_0_0_1"/>
<dbReference type="InParanoid" id="C4Y2K4"/>
<dbReference type="OMA" id="ESSAIWA"/>
<dbReference type="OrthoDB" id="49501at4891"/>
<dbReference type="Proteomes" id="UP000007703">
    <property type="component" value="Unassembled WGS sequence"/>
</dbReference>
<dbReference type="GO" id="GO:0005739">
    <property type="term" value="C:mitochondrion"/>
    <property type="evidence" value="ECO:0007669"/>
    <property type="project" value="UniProtKB-SubCell"/>
</dbReference>
<dbReference type="GO" id="GO:0003729">
    <property type="term" value="F:mRNA binding"/>
    <property type="evidence" value="ECO:0007669"/>
    <property type="project" value="TreeGrafter"/>
</dbReference>
<dbReference type="GO" id="GO:0006397">
    <property type="term" value="P:mRNA processing"/>
    <property type="evidence" value="ECO:0007669"/>
    <property type="project" value="UniProtKB-KW"/>
</dbReference>
<dbReference type="GO" id="GO:0008380">
    <property type="term" value="P:RNA splicing"/>
    <property type="evidence" value="ECO:0007669"/>
    <property type="project" value="UniProtKB-KW"/>
</dbReference>
<dbReference type="Gene3D" id="1.25.40.10">
    <property type="entry name" value="Tetratricopeptide repeat domain"/>
    <property type="match status" value="2"/>
</dbReference>
<dbReference type="InterPro" id="IPR051240">
    <property type="entry name" value="Mito_RNA-Proc/Resp"/>
</dbReference>
<dbReference type="InterPro" id="IPR002885">
    <property type="entry name" value="Pentatricopeptide_rpt"/>
</dbReference>
<dbReference type="InterPro" id="IPR011990">
    <property type="entry name" value="TPR-like_helical_dom_sf"/>
</dbReference>
<dbReference type="NCBIfam" id="TIGR00756">
    <property type="entry name" value="PPR"/>
    <property type="match status" value="2"/>
</dbReference>
<dbReference type="PANTHER" id="PTHR47933">
    <property type="entry name" value="PENTATRICOPEPTIDE REPEAT-CONTAINING PROTEIN 1, MITOCHONDRIAL"/>
    <property type="match status" value="1"/>
</dbReference>
<dbReference type="PANTHER" id="PTHR47933:SF11">
    <property type="entry name" value="PENTATRICOPEPTIDE REPEAT-CONTAINING PROTEIN 2"/>
    <property type="match status" value="1"/>
</dbReference>
<dbReference type="Pfam" id="PF01535">
    <property type="entry name" value="PPR"/>
    <property type="match status" value="2"/>
</dbReference>
<dbReference type="PROSITE" id="PS51375">
    <property type="entry name" value="PPR"/>
    <property type="match status" value="4"/>
</dbReference>
<name>CCM1_CLAL4</name>
<proteinExistence type="inferred from homology"/>